<accession>D3ZAT9</accession>
<gene>
    <name type="primary">Faxc</name>
</gene>
<feature type="chain" id="PRO_0000417444" description="Failed axon connections homolog">
    <location>
        <begin position="1"/>
        <end position="409"/>
    </location>
</feature>
<feature type="transmembrane region" description="Helical" evidence="2">
    <location>
        <begin position="68"/>
        <end position="88"/>
    </location>
</feature>
<feature type="region of interest" description="Disordered" evidence="3">
    <location>
        <begin position="372"/>
        <end position="409"/>
    </location>
</feature>
<sequence length="409" mass="46838">MHWGVGFASSRPCVVDLSWNQSISFFGWWAGSEEPFSFYGDIIAFPLQDYGGIMAGLGSDPWWKKTLYLTGGALLAAAAYLLHELLVIRKQQELDSKDAIILHQFARPNNGVPSLSPFCLKMETYLRMADLPYQNYFGGKLSAQGKMPWIEYNNEKVSGTEFIIDFLEEKLGVNLNKNLGPHERAVSRAVTKMVEEHFYWTLAYCQWVDNLNETRKMLSLSGGGPFSNLLRWVVCHITKGIVKREMHGHGIGRFSEEEIYMLMEKDMRSLAGLLGDKKYIMGPKLSTLDATVFGHLAQAMWTLPGTRPERLIKGELINLAMYCERIRRKFWPEWHHDDDNTIYESEESSEGSKTHTPMLDFSFYSRTETFEDEGAENSFSRTPDTDFTGHSLFDSDVDMDDYTEHEQCK</sequence>
<dbReference type="EMBL" id="AABR03041905">
    <property type="status" value="NOT_ANNOTATED_CDS"/>
    <property type="molecule type" value="Genomic_DNA"/>
</dbReference>
<dbReference type="EMBL" id="AABR03041640">
    <property type="status" value="NOT_ANNOTATED_CDS"/>
    <property type="molecule type" value="Genomic_DNA"/>
</dbReference>
<dbReference type="EMBL" id="AABR03040944">
    <property type="status" value="NOT_ANNOTATED_CDS"/>
    <property type="molecule type" value="Genomic_DNA"/>
</dbReference>
<dbReference type="RefSeq" id="NP_001257994.1">
    <property type="nucleotide sequence ID" value="NM_001271065.1"/>
</dbReference>
<dbReference type="SMR" id="D3ZAT9"/>
<dbReference type="FunCoup" id="D3ZAT9">
    <property type="interactions" value="2882"/>
</dbReference>
<dbReference type="STRING" id="10116.ENSRNOP00000013599"/>
<dbReference type="PhosphoSitePlus" id="D3ZAT9"/>
<dbReference type="PaxDb" id="10116-ENSRNOP00000013599"/>
<dbReference type="Ensembl" id="ENSRNOT00000013599.7">
    <property type="protein sequence ID" value="ENSRNOP00000013599.5"/>
    <property type="gene ID" value="ENSRNOG00000010106.7"/>
</dbReference>
<dbReference type="GeneID" id="366333"/>
<dbReference type="KEGG" id="rno:366333"/>
<dbReference type="AGR" id="RGD:1562449"/>
<dbReference type="CTD" id="84553"/>
<dbReference type="RGD" id="1562449">
    <property type="gene designation" value="Faxc"/>
</dbReference>
<dbReference type="eggNOG" id="KOG4244">
    <property type="taxonomic scope" value="Eukaryota"/>
</dbReference>
<dbReference type="GeneTree" id="ENSGT00950000182919"/>
<dbReference type="HOGENOM" id="CLU_044137_2_0_1"/>
<dbReference type="InParanoid" id="D3ZAT9"/>
<dbReference type="OMA" id="HLYTIAY"/>
<dbReference type="OrthoDB" id="5809458at2759"/>
<dbReference type="PRO" id="PR:D3ZAT9"/>
<dbReference type="Proteomes" id="UP000002494">
    <property type="component" value="Chromosome 5"/>
</dbReference>
<dbReference type="Bgee" id="ENSRNOG00000010106">
    <property type="expression patterns" value="Expressed in frontal cortex and 9 other cell types or tissues"/>
</dbReference>
<dbReference type="GO" id="GO:0005737">
    <property type="term" value="C:cytoplasm"/>
    <property type="evidence" value="ECO:0000318"/>
    <property type="project" value="GO_Central"/>
</dbReference>
<dbReference type="GO" id="GO:0016020">
    <property type="term" value="C:membrane"/>
    <property type="evidence" value="ECO:0007669"/>
    <property type="project" value="UniProtKB-SubCell"/>
</dbReference>
<dbReference type="CDD" id="cd03193">
    <property type="entry name" value="GST_C_Metaxin"/>
    <property type="match status" value="1"/>
</dbReference>
<dbReference type="CDD" id="cd03080">
    <property type="entry name" value="GST_N_Metaxin_like"/>
    <property type="match status" value="1"/>
</dbReference>
<dbReference type="InterPro" id="IPR026928">
    <property type="entry name" value="FAX/IsoI-like"/>
</dbReference>
<dbReference type="InterPro" id="IPR045796">
    <property type="entry name" value="FAXC_N"/>
</dbReference>
<dbReference type="InterPro" id="IPR036282">
    <property type="entry name" value="Glutathione-S-Trfase_C_sf"/>
</dbReference>
<dbReference type="InterPro" id="IPR040079">
    <property type="entry name" value="Glutathione_S-Trfase"/>
</dbReference>
<dbReference type="InterPro" id="IPR033468">
    <property type="entry name" value="Metaxin_GST"/>
</dbReference>
<dbReference type="InterPro" id="IPR050931">
    <property type="entry name" value="Mito_Protein_Transport_Metaxin"/>
</dbReference>
<dbReference type="InterPro" id="IPR012336">
    <property type="entry name" value="Thioredoxin-like_fold"/>
</dbReference>
<dbReference type="InterPro" id="IPR036249">
    <property type="entry name" value="Thioredoxin-like_sf"/>
</dbReference>
<dbReference type="PANTHER" id="PTHR12289:SF76">
    <property type="entry name" value="FAILED AXON CONNECTIONS HOMOLOG"/>
    <property type="match status" value="1"/>
</dbReference>
<dbReference type="PANTHER" id="PTHR12289">
    <property type="entry name" value="METAXIN RELATED"/>
    <property type="match status" value="1"/>
</dbReference>
<dbReference type="Pfam" id="PF19333">
    <property type="entry name" value="FAXC_N"/>
    <property type="match status" value="1"/>
</dbReference>
<dbReference type="Pfam" id="PF17171">
    <property type="entry name" value="GST_C_6"/>
    <property type="match status" value="1"/>
</dbReference>
<dbReference type="Pfam" id="PF17172">
    <property type="entry name" value="GST_N_4"/>
    <property type="match status" value="1"/>
</dbReference>
<dbReference type="SFLD" id="SFLDS00019">
    <property type="entry name" value="Glutathione_Transferase_(cytos"/>
    <property type="match status" value="1"/>
</dbReference>
<dbReference type="SFLD" id="SFLDG01200">
    <property type="entry name" value="SUF1.1"/>
    <property type="match status" value="1"/>
</dbReference>
<dbReference type="SUPFAM" id="SSF47616">
    <property type="entry name" value="GST C-terminal domain-like"/>
    <property type="match status" value="1"/>
</dbReference>
<dbReference type="SUPFAM" id="SSF52833">
    <property type="entry name" value="Thioredoxin-like"/>
    <property type="match status" value="1"/>
</dbReference>
<proteinExistence type="inferred from homology"/>
<name>FAXC_RAT</name>
<keyword id="KW-0472">Membrane</keyword>
<keyword id="KW-1185">Reference proteome</keyword>
<keyword id="KW-0812">Transmembrane</keyword>
<keyword id="KW-1133">Transmembrane helix</keyword>
<organism>
    <name type="scientific">Rattus norvegicus</name>
    <name type="common">Rat</name>
    <dbReference type="NCBI Taxonomy" id="10116"/>
    <lineage>
        <taxon>Eukaryota</taxon>
        <taxon>Metazoa</taxon>
        <taxon>Chordata</taxon>
        <taxon>Craniata</taxon>
        <taxon>Vertebrata</taxon>
        <taxon>Euteleostomi</taxon>
        <taxon>Mammalia</taxon>
        <taxon>Eutheria</taxon>
        <taxon>Euarchontoglires</taxon>
        <taxon>Glires</taxon>
        <taxon>Rodentia</taxon>
        <taxon>Myomorpha</taxon>
        <taxon>Muroidea</taxon>
        <taxon>Muridae</taxon>
        <taxon>Murinae</taxon>
        <taxon>Rattus</taxon>
    </lineage>
</organism>
<comment type="function">
    <text evidence="1">May play a role in axonal development.</text>
</comment>
<comment type="subcellular location">
    <subcellularLocation>
        <location evidence="4">Membrane</location>
        <topology evidence="4">Single-pass membrane protein</topology>
    </subcellularLocation>
</comment>
<comment type="similarity">
    <text evidence="4">Belongs to the FAX family.</text>
</comment>
<evidence type="ECO:0000250" key="1"/>
<evidence type="ECO:0000255" key="2"/>
<evidence type="ECO:0000256" key="3">
    <source>
        <dbReference type="SAM" id="MobiDB-lite"/>
    </source>
</evidence>
<evidence type="ECO:0000305" key="4"/>
<reference key="1">
    <citation type="journal article" date="2004" name="Nature">
        <title>Genome sequence of the Brown Norway rat yields insights into mammalian evolution.</title>
        <authorList>
            <person name="Gibbs R.A."/>
            <person name="Weinstock G.M."/>
            <person name="Metzker M.L."/>
            <person name="Muzny D.M."/>
            <person name="Sodergren E.J."/>
            <person name="Scherer S."/>
            <person name="Scott G."/>
            <person name="Steffen D."/>
            <person name="Worley K.C."/>
            <person name="Burch P.E."/>
            <person name="Okwuonu G."/>
            <person name="Hines S."/>
            <person name="Lewis L."/>
            <person name="Deramo C."/>
            <person name="Delgado O."/>
            <person name="Dugan-Rocha S."/>
            <person name="Miner G."/>
            <person name="Morgan M."/>
            <person name="Hawes A."/>
            <person name="Gill R."/>
            <person name="Holt R.A."/>
            <person name="Adams M.D."/>
            <person name="Amanatides P.G."/>
            <person name="Baden-Tillson H."/>
            <person name="Barnstead M."/>
            <person name="Chin S."/>
            <person name="Evans C.A."/>
            <person name="Ferriera S."/>
            <person name="Fosler C."/>
            <person name="Glodek A."/>
            <person name="Gu Z."/>
            <person name="Jennings D."/>
            <person name="Kraft C.L."/>
            <person name="Nguyen T."/>
            <person name="Pfannkoch C.M."/>
            <person name="Sitter C."/>
            <person name="Sutton G.G."/>
            <person name="Venter J.C."/>
            <person name="Woodage T."/>
            <person name="Smith D."/>
            <person name="Lee H.-M."/>
            <person name="Gustafson E."/>
            <person name="Cahill P."/>
            <person name="Kana A."/>
            <person name="Doucette-Stamm L."/>
            <person name="Weinstock K."/>
            <person name="Fechtel K."/>
            <person name="Weiss R.B."/>
            <person name="Dunn D.M."/>
            <person name="Green E.D."/>
            <person name="Blakesley R.W."/>
            <person name="Bouffard G.G."/>
            <person name="De Jong P.J."/>
            <person name="Osoegawa K."/>
            <person name="Zhu B."/>
            <person name="Marra M."/>
            <person name="Schein J."/>
            <person name="Bosdet I."/>
            <person name="Fjell C."/>
            <person name="Jones S."/>
            <person name="Krzywinski M."/>
            <person name="Mathewson C."/>
            <person name="Siddiqui A."/>
            <person name="Wye N."/>
            <person name="McPherson J."/>
            <person name="Zhao S."/>
            <person name="Fraser C.M."/>
            <person name="Shetty J."/>
            <person name="Shatsman S."/>
            <person name="Geer K."/>
            <person name="Chen Y."/>
            <person name="Abramzon S."/>
            <person name="Nierman W.C."/>
            <person name="Havlak P.H."/>
            <person name="Chen R."/>
            <person name="Durbin K.J."/>
            <person name="Egan A."/>
            <person name="Ren Y."/>
            <person name="Song X.-Z."/>
            <person name="Li B."/>
            <person name="Liu Y."/>
            <person name="Qin X."/>
            <person name="Cawley S."/>
            <person name="Cooney A.J."/>
            <person name="D'Souza L.M."/>
            <person name="Martin K."/>
            <person name="Wu J.Q."/>
            <person name="Gonzalez-Garay M.L."/>
            <person name="Jackson A.R."/>
            <person name="Kalafus K.J."/>
            <person name="McLeod M.P."/>
            <person name="Milosavljevic A."/>
            <person name="Virk D."/>
            <person name="Volkov A."/>
            <person name="Wheeler D.A."/>
            <person name="Zhang Z."/>
            <person name="Bailey J.A."/>
            <person name="Eichler E.E."/>
            <person name="Tuzun E."/>
            <person name="Birney E."/>
            <person name="Mongin E."/>
            <person name="Ureta-Vidal A."/>
            <person name="Woodwark C."/>
            <person name="Zdobnov E."/>
            <person name="Bork P."/>
            <person name="Suyama M."/>
            <person name="Torrents D."/>
            <person name="Alexandersson M."/>
            <person name="Trask B.J."/>
            <person name="Young J.M."/>
            <person name="Huang H."/>
            <person name="Wang H."/>
            <person name="Xing H."/>
            <person name="Daniels S."/>
            <person name="Gietzen D."/>
            <person name="Schmidt J."/>
            <person name="Stevens K."/>
            <person name="Vitt U."/>
            <person name="Wingrove J."/>
            <person name="Camara F."/>
            <person name="Mar Alba M."/>
            <person name="Abril J.F."/>
            <person name="Guigo R."/>
            <person name="Smit A."/>
            <person name="Dubchak I."/>
            <person name="Rubin E.M."/>
            <person name="Couronne O."/>
            <person name="Poliakov A."/>
            <person name="Huebner N."/>
            <person name="Ganten D."/>
            <person name="Goesele C."/>
            <person name="Hummel O."/>
            <person name="Kreitler T."/>
            <person name="Lee Y.-A."/>
            <person name="Monti J."/>
            <person name="Schulz H."/>
            <person name="Zimdahl H."/>
            <person name="Himmelbauer H."/>
            <person name="Lehrach H."/>
            <person name="Jacob H.J."/>
            <person name="Bromberg S."/>
            <person name="Gullings-Handley J."/>
            <person name="Jensen-Seaman M.I."/>
            <person name="Kwitek A.E."/>
            <person name="Lazar J."/>
            <person name="Pasko D."/>
            <person name="Tonellato P.J."/>
            <person name="Twigger S."/>
            <person name="Ponting C.P."/>
            <person name="Duarte J.M."/>
            <person name="Rice S."/>
            <person name="Goodstadt L."/>
            <person name="Beatson S.A."/>
            <person name="Emes R.D."/>
            <person name="Winter E.E."/>
            <person name="Webber C."/>
            <person name="Brandt P."/>
            <person name="Nyakatura G."/>
            <person name="Adetobi M."/>
            <person name="Chiaromonte F."/>
            <person name="Elnitski L."/>
            <person name="Eswara P."/>
            <person name="Hardison R.C."/>
            <person name="Hou M."/>
            <person name="Kolbe D."/>
            <person name="Makova K."/>
            <person name="Miller W."/>
            <person name="Nekrutenko A."/>
            <person name="Riemer C."/>
            <person name="Schwartz S."/>
            <person name="Taylor J."/>
            <person name="Yang S."/>
            <person name="Zhang Y."/>
            <person name="Lindpaintner K."/>
            <person name="Andrews T.D."/>
            <person name="Caccamo M."/>
            <person name="Clamp M."/>
            <person name="Clarke L."/>
            <person name="Curwen V."/>
            <person name="Durbin R.M."/>
            <person name="Eyras E."/>
            <person name="Searle S.M."/>
            <person name="Cooper G.M."/>
            <person name="Batzoglou S."/>
            <person name="Brudno M."/>
            <person name="Sidow A."/>
            <person name="Stone E.A."/>
            <person name="Payseur B.A."/>
            <person name="Bourque G."/>
            <person name="Lopez-Otin C."/>
            <person name="Puente X.S."/>
            <person name="Chakrabarti K."/>
            <person name="Chatterji S."/>
            <person name="Dewey C."/>
            <person name="Pachter L."/>
            <person name="Bray N."/>
            <person name="Yap V.B."/>
            <person name="Caspi A."/>
            <person name="Tesler G."/>
            <person name="Pevzner P.A."/>
            <person name="Haussler D."/>
            <person name="Roskin K.M."/>
            <person name="Baertsch R."/>
            <person name="Clawson H."/>
            <person name="Furey T.S."/>
            <person name="Hinrichs A.S."/>
            <person name="Karolchik D."/>
            <person name="Kent W.J."/>
            <person name="Rosenbloom K.R."/>
            <person name="Trumbower H."/>
            <person name="Weirauch M."/>
            <person name="Cooper D.N."/>
            <person name="Stenson P.D."/>
            <person name="Ma B."/>
            <person name="Brent M."/>
            <person name="Arumugam M."/>
            <person name="Shteynberg D."/>
            <person name="Copley R.R."/>
            <person name="Taylor M.S."/>
            <person name="Riethman H."/>
            <person name="Mudunuri U."/>
            <person name="Peterson J."/>
            <person name="Guyer M."/>
            <person name="Felsenfeld A."/>
            <person name="Old S."/>
            <person name="Mockrin S."/>
            <person name="Collins F.S."/>
        </authorList>
    </citation>
    <scope>NUCLEOTIDE SEQUENCE [LARGE SCALE GENOMIC DNA]</scope>
    <source>
        <strain>Brown Norway</strain>
    </source>
</reference>
<protein>
    <recommendedName>
        <fullName>Failed axon connections homolog</fullName>
    </recommendedName>
</protein>